<evidence type="ECO:0000255" key="1">
    <source>
        <dbReference type="HAMAP-Rule" id="MF_00712"/>
    </source>
</evidence>
<proteinExistence type="inferred from homology"/>
<sequence>MYKHPWLPNLDLIDEMLKEIGVNSLDELFNDIPAEIKINRLLNVAKGKPLSEYEIEKEINEKVKKNVELQAPPFIGAGICPHYIPNVVKFIIGRSEFYTSYTPYQPEISQGLLQALFEYQSLMAELLDMDVVNASMYDWGSALAEAVLMANRINGKKTVLVPENANPFHKEVVRTWIGGKGIKIEEVKYDKNSGELDLEDLEKKSNIDDISAIYIQQPNFFGIFESNIEHVIDVAKHKRALSIVGVNLLSLGLIKPPGSYEADIVVGDGQELGLPLNFGGPLMGVFAVRWDMSLVRQMPGRIVGITKDTNGKMGFTLILQTREQFIKREKATSNITTNEALLAIANAVYLSLLGKEGMRELAEEIYFRSHYAAKKLTEIDNVSMPFRSDFFEEFAIRFPIEYDKISNKLKERKLQGGLKLSDYTSLFCVTEVHDKKSIDLLVSTIQEMINGVETS</sequence>
<feature type="chain" id="PRO_1000212664" description="Probable glycine dehydrogenase (decarboxylating) subunit 1">
    <location>
        <begin position="1"/>
        <end position="455"/>
    </location>
</feature>
<comment type="function">
    <text evidence="1">The glycine cleavage system catalyzes the degradation of glycine. The P protein binds the alpha-amino group of glycine through its pyridoxal phosphate cofactor; CO(2) is released and the remaining methylamine moiety is then transferred to the lipoamide cofactor of the H protein.</text>
</comment>
<comment type="catalytic activity">
    <reaction evidence="1">
        <text>N(6)-[(R)-lipoyl]-L-lysyl-[glycine-cleavage complex H protein] + glycine + H(+) = N(6)-[(R)-S(8)-aminomethyldihydrolipoyl]-L-lysyl-[glycine-cleavage complex H protein] + CO2</text>
        <dbReference type="Rhea" id="RHEA:24304"/>
        <dbReference type="Rhea" id="RHEA-COMP:10494"/>
        <dbReference type="Rhea" id="RHEA-COMP:10495"/>
        <dbReference type="ChEBI" id="CHEBI:15378"/>
        <dbReference type="ChEBI" id="CHEBI:16526"/>
        <dbReference type="ChEBI" id="CHEBI:57305"/>
        <dbReference type="ChEBI" id="CHEBI:83099"/>
        <dbReference type="ChEBI" id="CHEBI:83143"/>
        <dbReference type="EC" id="1.4.4.2"/>
    </reaction>
</comment>
<comment type="subunit">
    <text evidence="1">The glycine cleavage system is composed of four proteins: P, T, L and H. In this organism, the P 'protein' is a heterodimer of two subunits.</text>
</comment>
<comment type="similarity">
    <text evidence="1">Belongs to the GcvP family. N-terminal subunit subfamily.</text>
</comment>
<dbReference type="EC" id="1.4.4.2" evidence="1"/>
<dbReference type="EMBL" id="CP001401">
    <property type="protein sequence ID" value="ACP55236.1"/>
    <property type="molecule type" value="Genomic_DNA"/>
</dbReference>
<dbReference type="RefSeq" id="WP_012718806.1">
    <property type="nucleotide sequence ID" value="NC_012632.1"/>
</dbReference>
<dbReference type="SMR" id="C3N5G1"/>
<dbReference type="GeneID" id="84055805"/>
<dbReference type="KEGG" id="sim:M1627_1353"/>
<dbReference type="HOGENOM" id="CLU_004620_0_2_2"/>
<dbReference type="Proteomes" id="UP000002307">
    <property type="component" value="Chromosome"/>
</dbReference>
<dbReference type="GO" id="GO:0004375">
    <property type="term" value="F:glycine dehydrogenase (decarboxylating) activity"/>
    <property type="evidence" value="ECO:0007669"/>
    <property type="project" value="UniProtKB-EC"/>
</dbReference>
<dbReference type="GO" id="GO:0019464">
    <property type="term" value="P:glycine decarboxylation via glycine cleavage system"/>
    <property type="evidence" value="ECO:0007669"/>
    <property type="project" value="UniProtKB-UniRule"/>
</dbReference>
<dbReference type="GO" id="GO:0009116">
    <property type="term" value="P:nucleoside metabolic process"/>
    <property type="evidence" value="ECO:0007669"/>
    <property type="project" value="InterPro"/>
</dbReference>
<dbReference type="CDD" id="cd00613">
    <property type="entry name" value="GDC-P"/>
    <property type="match status" value="1"/>
</dbReference>
<dbReference type="Gene3D" id="3.90.1150.10">
    <property type="entry name" value="Aspartate Aminotransferase, domain 1"/>
    <property type="match status" value="1"/>
</dbReference>
<dbReference type="Gene3D" id="3.40.640.10">
    <property type="entry name" value="Type I PLP-dependent aspartate aminotransferase-like (Major domain)"/>
    <property type="match status" value="1"/>
</dbReference>
<dbReference type="HAMAP" id="MF_00712">
    <property type="entry name" value="GcvPA"/>
    <property type="match status" value="1"/>
</dbReference>
<dbReference type="InterPro" id="IPR023010">
    <property type="entry name" value="GcvPA"/>
</dbReference>
<dbReference type="InterPro" id="IPR049315">
    <property type="entry name" value="GDC-P_N"/>
</dbReference>
<dbReference type="InterPro" id="IPR020581">
    <property type="entry name" value="GDC_P"/>
</dbReference>
<dbReference type="InterPro" id="IPR015424">
    <property type="entry name" value="PyrdxlP-dep_Trfase"/>
</dbReference>
<dbReference type="InterPro" id="IPR015421">
    <property type="entry name" value="PyrdxlP-dep_Trfase_major"/>
</dbReference>
<dbReference type="InterPro" id="IPR015422">
    <property type="entry name" value="PyrdxlP-dep_Trfase_small"/>
</dbReference>
<dbReference type="NCBIfam" id="NF001696">
    <property type="entry name" value="PRK00451.1"/>
    <property type="match status" value="1"/>
</dbReference>
<dbReference type="PANTHER" id="PTHR42806">
    <property type="entry name" value="GLYCINE CLEAVAGE SYSTEM P-PROTEIN"/>
    <property type="match status" value="1"/>
</dbReference>
<dbReference type="PANTHER" id="PTHR42806:SF1">
    <property type="entry name" value="GLYCINE DEHYDROGENASE (DECARBOXYLATING)"/>
    <property type="match status" value="1"/>
</dbReference>
<dbReference type="Pfam" id="PF02347">
    <property type="entry name" value="GDC-P"/>
    <property type="match status" value="1"/>
</dbReference>
<dbReference type="PIRSF" id="PIRSF006815">
    <property type="entry name" value="GcvPA"/>
    <property type="match status" value="1"/>
</dbReference>
<dbReference type="SUPFAM" id="SSF53383">
    <property type="entry name" value="PLP-dependent transferases"/>
    <property type="match status" value="1"/>
</dbReference>
<name>GCSPA_SACI3</name>
<gene>
    <name evidence="1" type="primary">gcvPA</name>
    <name type="ordered locus">M1627_1353</name>
</gene>
<accession>C3N5G1</accession>
<organism>
    <name type="scientific">Saccharolobus islandicus (strain M.16.27)</name>
    <name type="common">Sulfolobus islandicus</name>
    <dbReference type="NCBI Taxonomy" id="427318"/>
    <lineage>
        <taxon>Archaea</taxon>
        <taxon>Thermoproteota</taxon>
        <taxon>Thermoprotei</taxon>
        <taxon>Sulfolobales</taxon>
        <taxon>Sulfolobaceae</taxon>
        <taxon>Saccharolobus</taxon>
    </lineage>
</organism>
<keyword id="KW-0560">Oxidoreductase</keyword>
<protein>
    <recommendedName>
        <fullName evidence="1">Probable glycine dehydrogenase (decarboxylating) subunit 1</fullName>
        <ecNumber evidence="1">1.4.4.2</ecNumber>
    </recommendedName>
    <alternativeName>
        <fullName evidence="1">Glycine cleavage system P-protein subunit 1</fullName>
    </alternativeName>
    <alternativeName>
        <fullName evidence="1">Glycine decarboxylase subunit 1</fullName>
    </alternativeName>
    <alternativeName>
        <fullName evidence="1">Glycine dehydrogenase (aminomethyl-transferring) subunit 1</fullName>
    </alternativeName>
</protein>
<reference key="1">
    <citation type="journal article" date="2009" name="Proc. Natl. Acad. Sci. U.S.A.">
        <title>Biogeography of the Sulfolobus islandicus pan-genome.</title>
        <authorList>
            <person name="Reno M.L."/>
            <person name="Held N.L."/>
            <person name="Fields C.J."/>
            <person name="Burke P.V."/>
            <person name="Whitaker R.J."/>
        </authorList>
    </citation>
    <scope>NUCLEOTIDE SEQUENCE [LARGE SCALE GENOMIC DNA]</scope>
    <source>
        <strain>M.16.27</strain>
    </source>
</reference>